<gene>
    <name type="primary">TFIP11</name>
    <name type="synonym">STIP</name>
</gene>
<comment type="function">
    <text evidence="1">Involved in pre-mRNA splicing, specifically in spliceosome disassembly during late-stage splicing events. Intron turnover seems to proceed through reactions in two lariat-intron associated complexes termed Intron Large (IL) and Intron Small (IS). In cooperation with DHX15 seems to mediate the transition of the U2, U5 and U6 snRNP-containing IL complex to the snRNP-free IS complex leading to efficient debranching and turnover of excised introns. May play a role in the differentiation of ameloblasts and odontoblasts or in the forming of the enamel extracellular matrix (By similarity).</text>
</comment>
<comment type="subunit">
    <text evidence="1">Identified in the spliceosome C complex. Found in the Intron Large (IL) complex, a post-mRNA release spliceosomal complex containing the excised intron, U2, U5 and U6 snRNPs, and splicing factors. Interacts with TUFT1. Interacts with DHX15; indicative for a recruitment of DHX15 to the IL complex. Interacts with GCFC2 (By similarity).</text>
</comment>
<comment type="subcellular location">
    <subcellularLocation>
        <location evidence="1">Cytoplasm</location>
    </subcellularLocation>
    <subcellularLocation>
        <location evidence="1">Nucleus</location>
    </subcellularLocation>
    <text evidence="1">In the nucleus localizes to unique speckle domains in close proximity to nuclear speckles and not identical to paraspeckles.</text>
</comment>
<comment type="similarity">
    <text evidence="6">Belongs to the TFP11/STIP family.</text>
</comment>
<name>TFP11_PIG</name>
<dbReference type="EMBL" id="DQ923315">
    <property type="protein sequence ID" value="ABI95149.1"/>
    <property type="molecule type" value="mRNA"/>
</dbReference>
<dbReference type="RefSeq" id="NP_001070682.1">
    <property type="nucleotide sequence ID" value="NM_001077214.1"/>
</dbReference>
<dbReference type="RefSeq" id="XP_020927864.1">
    <property type="nucleotide sequence ID" value="XM_021072205.1"/>
</dbReference>
<dbReference type="RefSeq" id="XP_020927865.1">
    <property type="nucleotide sequence ID" value="XM_021072206.1"/>
</dbReference>
<dbReference type="SMR" id="Q06AK6"/>
<dbReference type="FunCoup" id="Q06AK6">
    <property type="interactions" value="3232"/>
</dbReference>
<dbReference type="STRING" id="9823.ENSSSCP00000010632"/>
<dbReference type="PaxDb" id="9823-ENSSSCP00000010632"/>
<dbReference type="PeptideAtlas" id="Q06AK6"/>
<dbReference type="Ensembl" id="ENSSSCT00000010917.4">
    <property type="protein sequence ID" value="ENSSSCP00000010632.3"/>
    <property type="gene ID" value="ENSSSCG00000009962.4"/>
</dbReference>
<dbReference type="Ensembl" id="ENSSSCT00025059673.1">
    <property type="protein sequence ID" value="ENSSSCP00025025312.1"/>
    <property type="gene ID" value="ENSSSCG00025043966.1"/>
</dbReference>
<dbReference type="Ensembl" id="ENSSSCT00030050869.1">
    <property type="protein sequence ID" value="ENSSSCP00030023134.1"/>
    <property type="gene ID" value="ENSSSCG00030036572.1"/>
</dbReference>
<dbReference type="Ensembl" id="ENSSSCT00035045312.1">
    <property type="protein sequence ID" value="ENSSSCP00035018124.1"/>
    <property type="gene ID" value="ENSSSCG00035034188.1"/>
</dbReference>
<dbReference type="Ensembl" id="ENSSSCT00040022063.1">
    <property type="protein sequence ID" value="ENSSSCP00040009223.1"/>
    <property type="gene ID" value="ENSSSCG00040016403.1"/>
</dbReference>
<dbReference type="Ensembl" id="ENSSSCT00045027924.1">
    <property type="protein sequence ID" value="ENSSSCP00045019314.1"/>
    <property type="gene ID" value="ENSSSCG00045016417.1"/>
</dbReference>
<dbReference type="Ensembl" id="ENSSSCT00050008832.1">
    <property type="protein sequence ID" value="ENSSSCP00050003792.1"/>
    <property type="gene ID" value="ENSSSCG00050006451.1"/>
</dbReference>
<dbReference type="Ensembl" id="ENSSSCT00055043959.1">
    <property type="protein sequence ID" value="ENSSSCP00055035011.1"/>
    <property type="gene ID" value="ENSSSCG00055022375.1"/>
</dbReference>
<dbReference type="Ensembl" id="ENSSSCT00060075747.1">
    <property type="protein sequence ID" value="ENSSSCP00060032738.1"/>
    <property type="gene ID" value="ENSSSCG00060055577.1"/>
</dbReference>
<dbReference type="Ensembl" id="ENSSSCT00065022741.1">
    <property type="protein sequence ID" value="ENSSSCP00065009228.1"/>
    <property type="gene ID" value="ENSSSCG00065017108.1"/>
</dbReference>
<dbReference type="Ensembl" id="ENSSSCT00070002293.1">
    <property type="protein sequence ID" value="ENSSSCP00070001915.1"/>
    <property type="gene ID" value="ENSSSCG00070001218.1"/>
</dbReference>
<dbReference type="Ensembl" id="ENSSSCT00070002302.1">
    <property type="protein sequence ID" value="ENSSSCP00070001923.1"/>
    <property type="gene ID" value="ENSSSCG00070001218.1"/>
</dbReference>
<dbReference type="Ensembl" id="ENSSSCT00070002337.1">
    <property type="protein sequence ID" value="ENSSSCP00070001957.1"/>
    <property type="gene ID" value="ENSSSCG00070001218.1"/>
</dbReference>
<dbReference type="Ensembl" id="ENSSSCT00085045455">
    <property type="protein sequence ID" value="ENSSSCP00085031782"/>
    <property type="gene ID" value="ENSSSCG00085023641"/>
</dbReference>
<dbReference type="Ensembl" id="ENSSSCT00090034690">
    <property type="protein sequence ID" value="ENSSSCP00090021558"/>
    <property type="gene ID" value="ENSSSCG00090019625"/>
</dbReference>
<dbReference type="Ensembl" id="ENSSSCT00105070371">
    <property type="protein sequence ID" value="ENSSSCP00105049838"/>
    <property type="gene ID" value="ENSSSCG00105036908"/>
</dbReference>
<dbReference type="Ensembl" id="ENSSSCT00110076292">
    <property type="protein sequence ID" value="ENSSSCP00110053890"/>
    <property type="gene ID" value="ENSSSCG00110039927"/>
</dbReference>
<dbReference type="Ensembl" id="ENSSSCT00115004806">
    <property type="protein sequence ID" value="ENSSSCP00115004446"/>
    <property type="gene ID" value="ENSSSCG00115002885"/>
</dbReference>
<dbReference type="Ensembl" id="ENSSSCT00130072172">
    <property type="protein sequence ID" value="ENSSSCP00130051981"/>
    <property type="gene ID" value="ENSSSCG00130037032"/>
</dbReference>
<dbReference type="GeneID" id="768099"/>
<dbReference type="KEGG" id="ssc:768099"/>
<dbReference type="CTD" id="24144"/>
<dbReference type="VGNC" id="VGNC:109426">
    <property type="gene designation" value="TFIP11"/>
</dbReference>
<dbReference type="eggNOG" id="KOG2184">
    <property type="taxonomic scope" value="Eukaryota"/>
</dbReference>
<dbReference type="GeneTree" id="ENSGT00390000012739"/>
<dbReference type="InParanoid" id="Q06AK6"/>
<dbReference type="OMA" id="CEQDIIQ"/>
<dbReference type="OrthoDB" id="4822at2759"/>
<dbReference type="Proteomes" id="UP000008227">
    <property type="component" value="Chromosome 14"/>
</dbReference>
<dbReference type="Proteomes" id="UP000314985">
    <property type="component" value="Chromosome 14"/>
</dbReference>
<dbReference type="Proteomes" id="UP000694570">
    <property type="component" value="Unplaced"/>
</dbReference>
<dbReference type="Proteomes" id="UP000694571">
    <property type="component" value="Unplaced"/>
</dbReference>
<dbReference type="Proteomes" id="UP000694720">
    <property type="component" value="Unplaced"/>
</dbReference>
<dbReference type="Proteomes" id="UP000694722">
    <property type="component" value="Unplaced"/>
</dbReference>
<dbReference type="Proteomes" id="UP000694723">
    <property type="component" value="Unplaced"/>
</dbReference>
<dbReference type="Proteomes" id="UP000694724">
    <property type="component" value="Unplaced"/>
</dbReference>
<dbReference type="Proteomes" id="UP000694725">
    <property type="component" value="Unplaced"/>
</dbReference>
<dbReference type="Proteomes" id="UP000694726">
    <property type="component" value="Unplaced"/>
</dbReference>
<dbReference type="Proteomes" id="UP000694727">
    <property type="component" value="Unplaced"/>
</dbReference>
<dbReference type="Proteomes" id="UP000694728">
    <property type="component" value="Unplaced"/>
</dbReference>
<dbReference type="Bgee" id="ENSSSCG00000009962">
    <property type="expression patterns" value="Expressed in oocyte and 42 other cell types or tissues"/>
</dbReference>
<dbReference type="ExpressionAtlas" id="Q06AK6">
    <property type="expression patterns" value="baseline and differential"/>
</dbReference>
<dbReference type="GO" id="GO:0071013">
    <property type="term" value="C:catalytic step 2 spliceosome"/>
    <property type="evidence" value="ECO:0007669"/>
    <property type="project" value="Ensembl"/>
</dbReference>
<dbReference type="GO" id="GO:0000781">
    <property type="term" value="C:chromosome, telomeric region"/>
    <property type="evidence" value="ECO:0007669"/>
    <property type="project" value="Ensembl"/>
</dbReference>
<dbReference type="GO" id="GO:0005737">
    <property type="term" value="C:cytoplasm"/>
    <property type="evidence" value="ECO:0007669"/>
    <property type="project" value="UniProtKB-SubCell"/>
</dbReference>
<dbReference type="GO" id="GO:0031012">
    <property type="term" value="C:extracellular matrix"/>
    <property type="evidence" value="ECO:0007669"/>
    <property type="project" value="Ensembl"/>
</dbReference>
<dbReference type="GO" id="GO:0016607">
    <property type="term" value="C:nuclear speck"/>
    <property type="evidence" value="ECO:0007669"/>
    <property type="project" value="Ensembl"/>
</dbReference>
<dbReference type="GO" id="GO:0005730">
    <property type="term" value="C:nucleolus"/>
    <property type="evidence" value="ECO:0007669"/>
    <property type="project" value="Ensembl"/>
</dbReference>
<dbReference type="GO" id="GO:0005681">
    <property type="term" value="C:spliceosomal complex"/>
    <property type="evidence" value="ECO:0000250"/>
    <property type="project" value="UniProtKB"/>
</dbReference>
<dbReference type="GO" id="GO:0071008">
    <property type="term" value="C:U2-type post-mRNA release spliceosomal complex"/>
    <property type="evidence" value="ECO:0000250"/>
    <property type="project" value="UniProtKB"/>
</dbReference>
<dbReference type="GO" id="GO:0003676">
    <property type="term" value="F:nucleic acid binding"/>
    <property type="evidence" value="ECO:0007669"/>
    <property type="project" value="InterPro"/>
</dbReference>
<dbReference type="GO" id="GO:0031214">
    <property type="term" value="P:biomineral tissue development"/>
    <property type="evidence" value="ECO:0007669"/>
    <property type="project" value="UniProtKB-KW"/>
</dbReference>
<dbReference type="GO" id="GO:0031333">
    <property type="term" value="P:negative regulation of protein-containing complex assembly"/>
    <property type="evidence" value="ECO:0007669"/>
    <property type="project" value="Ensembl"/>
</dbReference>
<dbReference type="GO" id="GO:0000390">
    <property type="term" value="P:spliceosomal complex disassembly"/>
    <property type="evidence" value="ECO:0000250"/>
    <property type="project" value="UniProtKB"/>
</dbReference>
<dbReference type="InterPro" id="IPR000467">
    <property type="entry name" value="G_patch_dom"/>
</dbReference>
<dbReference type="InterPro" id="IPR022783">
    <property type="entry name" value="GCFC_dom"/>
</dbReference>
<dbReference type="InterPro" id="IPR022159">
    <property type="entry name" value="STIP/TFIP11_N"/>
</dbReference>
<dbReference type="InterPro" id="IPR024933">
    <property type="entry name" value="TFP11"/>
</dbReference>
<dbReference type="InterPro" id="IPR045211">
    <property type="entry name" value="TFP11/STIP/Ntr1"/>
</dbReference>
<dbReference type="PANTHER" id="PTHR23329:SF1">
    <property type="entry name" value="TUFTELIN-INTERACTING PROTEIN 11"/>
    <property type="match status" value="1"/>
</dbReference>
<dbReference type="PANTHER" id="PTHR23329">
    <property type="entry name" value="TUFTELIN-INTERACTING PROTEIN 11-RELATED"/>
    <property type="match status" value="1"/>
</dbReference>
<dbReference type="Pfam" id="PF01585">
    <property type="entry name" value="G-patch"/>
    <property type="match status" value="1"/>
</dbReference>
<dbReference type="Pfam" id="PF07842">
    <property type="entry name" value="GCFC"/>
    <property type="match status" value="1"/>
</dbReference>
<dbReference type="Pfam" id="PF12457">
    <property type="entry name" value="TIP_N"/>
    <property type="match status" value="1"/>
</dbReference>
<dbReference type="PIRSF" id="PIRSF017706">
    <property type="entry name" value="TFIP11"/>
    <property type="match status" value="1"/>
</dbReference>
<dbReference type="SMART" id="SM00443">
    <property type="entry name" value="G_patch"/>
    <property type="match status" value="1"/>
</dbReference>
<dbReference type="PROSITE" id="PS50174">
    <property type="entry name" value="G_PATCH"/>
    <property type="match status" value="1"/>
</dbReference>
<proteinExistence type="evidence at transcript level"/>
<organism>
    <name type="scientific">Sus scrofa</name>
    <name type="common">Pig</name>
    <dbReference type="NCBI Taxonomy" id="9823"/>
    <lineage>
        <taxon>Eukaryota</taxon>
        <taxon>Metazoa</taxon>
        <taxon>Chordata</taxon>
        <taxon>Craniata</taxon>
        <taxon>Vertebrata</taxon>
        <taxon>Euteleostomi</taxon>
        <taxon>Mammalia</taxon>
        <taxon>Eutheria</taxon>
        <taxon>Laurasiatheria</taxon>
        <taxon>Artiodactyla</taxon>
        <taxon>Suina</taxon>
        <taxon>Suidae</taxon>
        <taxon>Sus</taxon>
    </lineage>
</organism>
<reference key="1">
    <citation type="journal article" date="2007" name="Exp. Cell Res.">
        <title>Characterization of STIP, a multi-domain nuclear protein, highly conserved in metazoans, and essential for embryogenesis in Caenorhabditis elegans.</title>
        <authorList>
            <person name="Ji Q."/>
            <person name="Huang C.-H."/>
            <person name="Peng J."/>
            <person name="Hashmi S."/>
            <person name="Ye T."/>
            <person name="Chen Y."/>
        </authorList>
    </citation>
    <scope>NUCLEOTIDE SEQUENCE [MRNA]</scope>
</reference>
<keyword id="KW-0091">Biomineralization</keyword>
<keyword id="KW-0963">Cytoplasm</keyword>
<keyword id="KW-0507">mRNA processing</keyword>
<keyword id="KW-0508">mRNA splicing</keyword>
<keyword id="KW-0539">Nucleus</keyword>
<keyword id="KW-0597">Phosphoprotein</keyword>
<keyword id="KW-1185">Reference proteome</keyword>
<keyword id="KW-0747">Spliceosome</keyword>
<protein>
    <recommendedName>
        <fullName>Tuftelin-interacting protein 11</fullName>
    </recommendedName>
    <alternativeName>
        <fullName>Septin and tuftelin-interacting protein 1</fullName>
        <shortName>STIP-1</shortName>
    </alternativeName>
</protein>
<sequence>MSLSHLYRDGEGHMDDDEDERENFEITDWDLQNEFNPNRQRHWQTKEEATYGVWAERDSDEERPSFGGKRARDYSAPVNFISAGLKKGAAEEAELEDSDDEEKPVKQDEFPKDFGPKKLKTGGNFKPSQKGFAGGTKSFMDFGSWERHTKGIGQKLLQKMGYVPGRGLGKNAQGIINPIEAKQRKGKGAVGAYGSERTTQSLQDFPVVDSEEEAEEEFQKELSQWRKDPSGSKKKPKYSYKTVEELKAKGRISKKLSAPQKEISQVKVIDMTGREQKVYYSYSQISHKHNVPDDGLPLQSQLPQPGKEAKAPGFALPELEHNLQLLIELTEQEIIQNDRQLQYERDMVVNLSHELEKMAEVLEHEERVISNLSKVLEMVEECERRLQPGCSNPLTLDECARIFETLQDKYYEEYRMSDRVDLAVAIVYPLMKDYFKEWDPLKDCTYGTEIISKWKSLLENDQLLSHGGQDLSADAFHRLIWEVWMPFVRNIVTQWQPRNCDPMVDFLDSWVHIIPVWILDNILDQLVFPKLQKEVENWNPLTDTVPIHSWIHPWLPLMQARLEPLYSPIRSKLASALQKWHPSDSSAKLILQPWKDVFTPGSWEAFMVKNIVPKLGMCLGELVINPHQQHMDAFYWVIDWEGMISVSSLVGLLEKHFFPKWLQVLCSWLSNSPNYEEITKWYLGWKSMFSDQVLAHPSVKDKFNEALDIMNRAVSSNVGAYMQPGARENIAYLTHTERRKDFQYEAMQERREAENMAQRGIGVAASSVPMNFKDLIETKAEEHNIVFMPVIGKRHEGKQLYTFGRIVIYIDRGVVFVQGEKTWVPTSLQSLIDMAK</sequence>
<feature type="chain" id="PRO_0000342275" description="Tuftelin-interacting protein 11">
    <location>
        <begin position="1"/>
        <end position="836"/>
    </location>
</feature>
<feature type="domain" description="G-patch" evidence="4">
    <location>
        <begin position="149"/>
        <end position="195"/>
    </location>
</feature>
<feature type="region of interest" description="Required for interaction with DHX15" evidence="1">
    <location>
        <begin position="1"/>
        <end position="50"/>
    </location>
</feature>
<feature type="region of interest" description="Disordered" evidence="5">
    <location>
        <begin position="1"/>
        <end position="31"/>
    </location>
</feature>
<feature type="region of interest" description="Disordered" evidence="5">
    <location>
        <begin position="54"/>
        <end position="73"/>
    </location>
</feature>
<feature type="region of interest" description="Disordered" evidence="5">
    <location>
        <begin position="85"/>
        <end position="136"/>
    </location>
</feature>
<feature type="region of interest" description="Disordered" evidence="5">
    <location>
        <begin position="183"/>
        <end position="236"/>
    </location>
</feature>
<feature type="region of interest" description="Required for nuclear speckle localization" evidence="1">
    <location>
        <begin position="709"/>
        <end position="733"/>
    </location>
</feature>
<feature type="short sequence motif" description="Nuclear localization signal" evidence="1">
    <location>
        <begin position="699"/>
        <end position="704"/>
    </location>
</feature>
<feature type="compositionally biased region" description="Basic and acidic residues" evidence="5">
    <location>
        <begin position="1"/>
        <end position="13"/>
    </location>
</feature>
<feature type="compositionally biased region" description="Acidic residues" evidence="5">
    <location>
        <begin position="14"/>
        <end position="28"/>
    </location>
</feature>
<feature type="compositionally biased region" description="Basic and acidic residues" evidence="5">
    <location>
        <begin position="54"/>
        <end position="64"/>
    </location>
</feature>
<feature type="compositionally biased region" description="Acidic residues" evidence="5">
    <location>
        <begin position="91"/>
        <end position="102"/>
    </location>
</feature>
<feature type="compositionally biased region" description="Basic and acidic residues" evidence="5">
    <location>
        <begin position="103"/>
        <end position="116"/>
    </location>
</feature>
<feature type="compositionally biased region" description="Basic and acidic residues" evidence="5">
    <location>
        <begin position="217"/>
        <end position="231"/>
    </location>
</feature>
<feature type="modified residue" description="Phosphoserine" evidence="2">
    <location>
        <position position="2"/>
    </location>
</feature>
<feature type="modified residue" description="Phosphoserine" evidence="3">
    <location>
        <position position="59"/>
    </location>
</feature>
<feature type="modified residue" description="Phosphoserine" evidence="3">
    <location>
        <position position="98"/>
    </location>
</feature>
<feature type="modified residue" description="Phosphoserine" evidence="3">
    <location>
        <position position="144"/>
    </location>
</feature>
<feature type="modified residue" description="Phosphoserine" evidence="3">
    <location>
        <position position="210"/>
    </location>
</feature>
<accession>Q06AK6</accession>
<evidence type="ECO:0000250" key="1"/>
<evidence type="ECO:0000250" key="2">
    <source>
        <dbReference type="UniProtKB" id="Q5U2Y6"/>
    </source>
</evidence>
<evidence type="ECO:0000250" key="3">
    <source>
        <dbReference type="UniProtKB" id="Q9UBB9"/>
    </source>
</evidence>
<evidence type="ECO:0000255" key="4">
    <source>
        <dbReference type="PROSITE-ProRule" id="PRU00092"/>
    </source>
</evidence>
<evidence type="ECO:0000256" key="5">
    <source>
        <dbReference type="SAM" id="MobiDB-lite"/>
    </source>
</evidence>
<evidence type="ECO:0000305" key="6"/>